<accession>P0DTU2</accession>
<keyword id="KW-0878">Amphibian defense peptide</keyword>
<keyword id="KW-0903">Direct protein sequencing</keyword>
<keyword id="KW-0582">Pharmaceutical</keyword>
<keyword id="KW-0964">Secreted</keyword>
<reference key="1">
    <citation type="journal article" date="2017" name="Peptides">
        <title>Peptidomic analysis of skin secretions of the Mexican burrowing toad Rhinophrynus dorsalis (Rhinophrynidae): insight into the origin of host-defense peptides within the Pipidae and characterization of a proline-arginine-rich peptide.</title>
        <authorList>
            <person name="Conlon J.M."/>
            <person name="Guilhaudis L."/>
            <person name="Leprince J."/>
            <person name="Coquet L."/>
            <person name="Mangoni M.L."/>
            <person name="Attoub S."/>
            <person name="Jouenne T."/>
            <person name="King J.D."/>
        </authorList>
    </citation>
    <scope>PROTEIN SEQUENCE</scope>
    <scope>MASS SPECTROMETRY</scope>
    <scope>SYNTHESIS OF 1-27</scope>
    <scope>SUBCELLULAR LOCATION</scope>
    <source>
        <tissue>Skin secretion</tissue>
    </source>
</reference>
<reference key="2">
    <citation type="journal article" date="2019" name="Biochimie">
        <title>Conformational analysis and in vitro immunomodulatory and insulinotropic properties of the frog skin host-defense peptide rhinophrynin-27 and selected analogs.</title>
        <authorList>
            <person name="Scorciapino M.A."/>
            <person name="Carta P."/>
            <person name="Pantic J."/>
            <person name="Lukic M.L."/>
            <person name="Lukic A."/>
            <person name="Musale V."/>
            <person name="Abdel-Wahab Y.H.A."/>
            <person name="Conlon J.M."/>
        </authorList>
    </citation>
    <scope>FUNCTION</scope>
    <scope>MUTAGENESIS OF GLU-1; GLU-6; ALA-8; GLU-13; ALA-17 AND ALA-23</scope>
</reference>
<name>RP33_RHIDO</name>
<comment type="function">
    <molecule>Rhinophrynin-27</molecule>
    <text evidence="1 2">Non-cytotoxic peptide with immunosuppressive and insulinotropic effects (PubMed:31639404). Induces an increased production of the anti-inflammatory cytokine IL-10 and inhibits production of the pro-inflammatory cytokines TNF-alpha and IL-1beta, when incubated with mouse peritoneal cells (PubMed:31639404). Does not display growth-inhibitory activity against the Gram-positive S.epidermidis and Gram-negative E.coli bacteria and against the opportunistic yeast pathogen C.parapsilosis (MIC&gt;128 uM) (PubMed:28951157). In addition, it lacks cytotoxic activity against mouse erythrocytes (LC(50)&gt;500 uM) and A549 human non-small cell lung adenocarcinoma cells (LC(50)&gt;100 uM) (PubMed:28951157). Moderately stimulates insulin release from rat clonal beta-cells and mouse pancreatic islets (PubMed:31639404).</text>
</comment>
<comment type="function">
    <molecule>Rhinophrynin-33</molecule>
    <text evidence="2">Non-cytotoxic peptide with immunosuppressive but without insulinotropic effects (PubMed:31639404). Inhibits production of the pro-inflammatory cytokines TNF-alpha, but has no effect on IL-10 and IL-1beta production, when incubated with mouse peritoneal cells (PubMed:31639404). Has no activity of stimulation of insulin release (PubMed:31639404).</text>
</comment>
<comment type="subcellular location">
    <subcellularLocation>
        <location evidence="1">Secreted</location>
    </subcellularLocation>
</comment>
<comment type="tissue specificity">
    <text evidence="5">Expressed by the skin glands.</text>
</comment>
<comment type="mass spectrometry">
    <molecule>Rhinophrynin-33</molecule>
</comment>
<comment type="mass spectrometry">
    <molecule>Rhinophrynin-27</molecule>
</comment>
<comment type="pharmaceutical">
    <text evidence="5">May represent a template for the development of an agent for use in anti-inflammatory and type 2 diabetes therapies.</text>
</comment>
<comment type="miscellaneous">
    <text evidence="1 5">RP-33 is present in skin secretions in higher concentration than RP-27 (PubMed:28951157). RP-33 may be a precursor of RP-27 that is activated in the skin in response to an appropriate stimulus (Probable).</text>
</comment>
<dbReference type="SMR" id="P0DTU2"/>
<dbReference type="GO" id="GO:0005576">
    <property type="term" value="C:extracellular region"/>
    <property type="evidence" value="ECO:0007669"/>
    <property type="project" value="UniProtKB-SubCell"/>
</dbReference>
<dbReference type="GO" id="GO:0006952">
    <property type="term" value="P:defense response"/>
    <property type="evidence" value="ECO:0007669"/>
    <property type="project" value="UniProtKB-KW"/>
</dbReference>
<organism>
    <name type="scientific">Rhinophrynus dorsalis</name>
    <name type="common">Mexican burrowing toad</name>
    <dbReference type="NCBI Taxonomy" id="43566"/>
    <lineage>
        <taxon>Eukaryota</taxon>
        <taxon>Metazoa</taxon>
        <taxon>Chordata</taxon>
        <taxon>Craniata</taxon>
        <taxon>Vertebrata</taxon>
        <taxon>Euteleostomi</taxon>
        <taxon>Amphibia</taxon>
        <taxon>Batrachia</taxon>
        <taxon>Anura</taxon>
        <taxon>Pipoidea</taxon>
        <taxon>Rhinophrynidae</taxon>
        <taxon>Rhinophrynus</taxon>
    </lineage>
</organism>
<protein>
    <recommendedName>
        <fullName evidence="3 4">Rhinophrynin-33</fullName>
        <shortName evidence="4">RP-33</shortName>
    </recommendedName>
    <component>
        <recommendedName>
            <fullName evidence="3 4">Rhinophrynin-27</fullName>
            <shortName evidence="4">RP-27</shortName>
        </recommendedName>
    </component>
</protein>
<sequence>ELRLPEIARPVPEVLPARLPLPALPRNKMAKNQ</sequence>
<proteinExistence type="evidence at protein level"/>
<evidence type="ECO:0000269" key="1">
    <source>
    </source>
</evidence>
<evidence type="ECO:0000269" key="2">
    <source>
    </source>
</evidence>
<evidence type="ECO:0000303" key="3">
    <source>
    </source>
</evidence>
<evidence type="ECO:0000303" key="4">
    <source>
    </source>
</evidence>
<evidence type="ECO:0000305" key="5">
    <source>
    </source>
</evidence>
<feature type="chain" id="PRO_0000450016" description="Rhinophrynin-33" evidence="1">
    <location>
        <begin position="1"/>
        <end position="33"/>
    </location>
</feature>
<feature type="peptide" id="PRO_0000450017" description="Rhinophrynin-27" evidence="1">
    <location>
        <begin position="1"/>
        <end position="27"/>
    </location>
</feature>
<feature type="mutagenesis site" description="In [E1R]RP-27; decrease in stimulation of insulin release and loss of cytokine production effect on mouse peritoneal cells. In [E1R,E6R]RP-27; loss of stimulation of insulin release, loss of TNF-alpha production effect on mouse peritoneal cells, and no change on IL-10 and IL-1beta production effect. In [E1R,E6R,E13R]RP-27; loss of stimulation of insulin release, increase of IL-10 and TNF-alpha production effect on mouse peritoneal cells, and no change on IL-1beta production effect." evidence="2">
    <original>E</original>
    <variation>R</variation>
    <location>
        <position position="1"/>
    </location>
</feature>
<feature type="mutagenesis site" description="In [E1R,E6R]RP-27; loss of stimulation of insulin release, loss of TNF-alpha production effect on mouse peritoneal cells, and no change on IL-10 and IL-1beta production effect. In [E1R,E6R,E13R]RP-27; loss of stimulation of insulin release, increase of IL-10 and TNF-alpha production effect on mouse peritoneal cells, and no change on IL-1beta production effect." evidence="2">
    <original>E</original>
    <variation>R</variation>
    <location>
        <position position="6"/>
    </location>
</feature>
<feature type="mutagenesis site" description="In [A8W]RP-27; loss of stimulation of insulin release, increase of TNF-alpha and IL-1beta production effect on mouse peritoneal cells, and decrease of IL-10 production effect. In [A8W,A17W]RP-27; important decrease of stimulation of insulin release, increase of TNF-alpha and IL-1beta production effect on mouse peritoneal cells, and non-significant decrease of IL-10 production effect. In [A8W,A17W,A23W]RP-27; important decrease of stimulation of insulin release, increase of TNF-alpha and IL-1beta production effect on mouse peritoneal cells, and no change of IL-10 production effect." evidence="2">
    <original>A</original>
    <variation>W</variation>
    <location>
        <position position="8"/>
    </location>
</feature>
<feature type="mutagenesis site" description="In [E1R,E6R,E13R]RP-27; loss of stimulation of insulin release and increase of IL-10 and TNF-alpha production effect on mouse peritoneal cells, and no change on IL-1beta production effect." evidence="2">
    <original>E</original>
    <variation>R</variation>
    <location>
        <position position="13"/>
    </location>
</feature>
<feature type="mutagenesis site" description="In [A8W,A17W]RP-27; important decrease of stimulation of insulin release, increase of TNF-alpha and IL-1beta production effect on mouse peritoneal cells, and non-significant decrease of IL-10 production effect. In [A8W,A17W,A23W]RP-27; important decrease of stimulation of insulin release, increase of TNF-alpha and IL-1beta production effect on mouse peritoneal cells, and no change of IL-10 production effect." evidence="2">
    <original>A</original>
    <variation>W</variation>
    <location>
        <position position="17"/>
    </location>
</feature>
<feature type="mutagenesis site" description="In [A8W,A17W,A23W]RP-27; important decrease of stimulation of insulin release, increase of TNF-alpha and IL-1beta production effect on mouse peritoneal cells, and no change of IL-10 production effect." evidence="2">
    <original>A</original>
    <variation>W</variation>
    <location>
        <position position="23"/>
    </location>
</feature>